<name>HIS8_CAMJD</name>
<comment type="catalytic activity">
    <reaction evidence="1">
        <text>L-histidinol phosphate + 2-oxoglutarate = 3-(imidazol-4-yl)-2-oxopropyl phosphate + L-glutamate</text>
        <dbReference type="Rhea" id="RHEA:23744"/>
        <dbReference type="ChEBI" id="CHEBI:16810"/>
        <dbReference type="ChEBI" id="CHEBI:29985"/>
        <dbReference type="ChEBI" id="CHEBI:57766"/>
        <dbReference type="ChEBI" id="CHEBI:57980"/>
        <dbReference type="EC" id="2.6.1.9"/>
    </reaction>
</comment>
<comment type="cofactor">
    <cofactor evidence="1">
        <name>pyridoxal 5'-phosphate</name>
        <dbReference type="ChEBI" id="CHEBI:597326"/>
    </cofactor>
</comment>
<comment type="pathway">
    <text evidence="1">Amino-acid biosynthesis; L-histidine biosynthesis; L-histidine from 5-phospho-alpha-D-ribose 1-diphosphate: step 7/9.</text>
</comment>
<comment type="subunit">
    <text evidence="1">Homodimer.</text>
</comment>
<comment type="similarity">
    <text evidence="1">Belongs to the class-II pyridoxal-phosphate-dependent aminotransferase family. Histidinol-phosphate aminotransferase subfamily.</text>
</comment>
<gene>
    <name evidence="1" type="primary">hisC</name>
    <name type="ordered locus">JJD26997_1646</name>
</gene>
<protein>
    <recommendedName>
        <fullName evidence="1">Histidinol-phosphate aminotransferase</fullName>
        <ecNumber evidence="1">2.6.1.9</ecNumber>
    </recommendedName>
    <alternativeName>
        <fullName evidence="1">Imidazole acetol-phosphate transaminase</fullName>
    </alternativeName>
</protein>
<evidence type="ECO:0000255" key="1">
    <source>
        <dbReference type="HAMAP-Rule" id="MF_01023"/>
    </source>
</evidence>
<organism>
    <name type="scientific">Campylobacter jejuni subsp. doylei (strain ATCC BAA-1458 / RM4099 / 269.97)</name>
    <dbReference type="NCBI Taxonomy" id="360109"/>
    <lineage>
        <taxon>Bacteria</taxon>
        <taxon>Pseudomonadati</taxon>
        <taxon>Campylobacterota</taxon>
        <taxon>Epsilonproteobacteria</taxon>
        <taxon>Campylobacterales</taxon>
        <taxon>Campylobacteraceae</taxon>
        <taxon>Campylobacter</taxon>
    </lineage>
</organism>
<dbReference type="EC" id="2.6.1.9" evidence="1"/>
<dbReference type="EMBL" id="CP000768">
    <property type="protein sequence ID" value="ABS44071.1"/>
    <property type="molecule type" value="Genomic_DNA"/>
</dbReference>
<dbReference type="SMR" id="A7H556"/>
<dbReference type="KEGG" id="cjd:JJD26997_1646"/>
<dbReference type="HOGENOM" id="CLU_017584_3_3_7"/>
<dbReference type="UniPathway" id="UPA00031">
    <property type="reaction ID" value="UER00012"/>
</dbReference>
<dbReference type="Proteomes" id="UP000002302">
    <property type="component" value="Chromosome"/>
</dbReference>
<dbReference type="GO" id="GO:0004400">
    <property type="term" value="F:histidinol-phosphate transaminase activity"/>
    <property type="evidence" value="ECO:0007669"/>
    <property type="project" value="UniProtKB-UniRule"/>
</dbReference>
<dbReference type="GO" id="GO:0030170">
    <property type="term" value="F:pyridoxal phosphate binding"/>
    <property type="evidence" value="ECO:0007669"/>
    <property type="project" value="InterPro"/>
</dbReference>
<dbReference type="GO" id="GO:0000105">
    <property type="term" value="P:L-histidine biosynthetic process"/>
    <property type="evidence" value="ECO:0007669"/>
    <property type="project" value="UniProtKB-UniRule"/>
</dbReference>
<dbReference type="CDD" id="cd00609">
    <property type="entry name" value="AAT_like"/>
    <property type="match status" value="1"/>
</dbReference>
<dbReference type="Gene3D" id="3.90.1150.10">
    <property type="entry name" value="Aspartate Aminotransferase, domain 1"/>
    <property type="match status" value="1"/>
</dbReference>
<dbReference type="Gene3D" id="3.40.640.10">
    <property type="entry name" value="Type I PLP-dependent aspartate aminotransferase-like (Major domain)"/>
    <property type="match status" value="1"/>
</dbReference>
<dbReference type="HAMAP" id="MF_01023">
    <property type="entry name" value="HisC_aminotrans_2"/>
    <property type="match status" value="1"/>
</dbReference>
<dbReference type="InterPro" id="IPR004839">
    <property type="entry name" value="Aminotransferase_I/II_large"/>
</dbReference>
<dbReference type="InterPro" id="IPR005861">
    <property type="entry name" value="HisP_aminotrans"/>
</dbReference>
<dbReference type="InterPro" id="IPR050106">
    <property type="entry name" value="HistidinolP_aminotransfase"/>
</dbReference>
<dbReference type="InterPro" id="IPR015424">
    <property type="entry name" value="PyrdxlP-dep_Trfase"/>
</dbReference>
<dbReference type="InterPro" id="IPR015421">
    <property type="entry name" value="PyrdxlP-dep_Trfase_major"/>
</dbReference>
<dbReference type="InterPro" id="IPR015422">
    <property type="entry name" value="PyrdxlP-dep_Trfase_small"/>
</dbReference>
<dbReference type="NCBIfam" id="TIGR01141">
    <property type="entry name" value="hisC"/>
    <property type="match status" value="1"/>
</dbReference>
<dbReference type="PANTHER" id="PTHR43643:SF3">
    <property type="entry name" value="HISTIDINOL-PHOSPHATE AMINOTRANSFERASE"/>
    <property type="match status" value="1"/>
</dbReference>
<dbReference type="PANTHER" id="PTHR43643">
    <property type="entry name" value="HISTIDINOL-PHOSPHATE AMINOTRANSFERASE 2"/>
    <property type="match status" value="1"/>
</dbReference>
<dbReference type="Pfam" id="PF00155">
    <property type="entry name" value="Aminotran_1_2"/>
    <property type="match status" value="1"/>
</dbReference>
<dbReference type="SUPFAM" id="SSF53383">
    <property type="entry name" value="PLP-dependent transferases"/>
    <property type="match status" value="1"/>
</dbReference>
<accession>A7H556</accession>
<sequence>MKFNEFLNHLSNYEPGKDIELIAKEYGVKEVIKLASNENPFGTPSKAIECLRQNANKAHLYPDDSMVELKSALAQKYKIQNENIIIGAGSDQVIEFAIHSKLNSKNAFLQAGVTFAMYEIYAKQCGAKCYKTQSITHNLDEFKKLYETHKDEIKLIFLCLPNNPLGECLDASEVIEFIKGVHKDCLVVIDAAYNEFASFKDSKKHLEPCELIKEFENVLYLGTFSKLYGLGGLRIGYGIANANIISAFYKLRAPFNVSNLALKAAVVAMDDDEFTKKTLENNFSQMQLYKEFAKKYDIKIIDSYTNFITYFFDEKNSTDLSEKLLKKGIIIRNLKSYGLNAIRITIGTSYENERFFTEFDKILR</sequence>
<feature type="chain" id="PRO_1000063467" description="Histidinol-phosphate aminotransferase">
    <location>
        <begin position="1"/>
        <end position="364"/>
    </location>
</feature>
<feature type="modified residue" description="N6-(pyridoxal phosphate)lysine" evidence="1">
    <location>
        <position position="226"/>
    </location>
</feature>
<reference key="1">
    <citation type="submission" date="2007-07" db="EMBL/GenBank/DDBJ databases">
        <title>Complete genome sequence of Campylobacter jejuni subsp doylei 269.97 isolated from human blood.</title>
        <authorList>
            <person name="Fouts D.E."/>
            <person name="Mongodin E.F."/>
            <person name="Puiu D."/>
            <person name="Sebastian Y."/>
            <person name="Miller W.G."/>
            <person name="Mandrell R.E."/>
            <person name="Lastovica A.J."/>
            <person name="Nelson K.E."/>
        </authorList>
    </citation>
    <scope>NUCLEOTIDE SEQUENCE [LARGE SCALE GENOMIC DNA]</scope>
    <source>
        <strain>ATCC BAA-1458 / RM4099 / 269.97</strain>
    </source>
</reference>
<keyword id="KW-0028">Amino-acid biosynthesis</keyword>
<keyword id="KW-0032">Aminotransferase</keyword>
<keyword id="KW-0368">Histidine biosynthesis</keyword>
<keyword id="KW-0663">Pyridoxal phosphate</keyword>
<keyword id="KW-0808">Transferase</keyword>
<proteinExistence type="inferred from homology"/>